<comment type="catalytic activity">
    <reaction>
        <text>Random hydrolysis of (1-&gt;6)-alpha-D-mannosidic linkages in unbranched (1-&gt;6)-mannans.</text>
        <dbReference type="EC" id="3.2.1.101"/>
    </reaction>
</comment>
<comment type="similarity">
    <text evidence="2">Belongs to the glycosyl hydrolase 76 family.</text>
</comment>
<accession>O74556</accession>
<proteinExistence type="inferred from homology"/>
<keyword id="KW-0325">Glycoprotein</keyword>
<keyword id="KW-0326">Glycosidase</keyword>
<keyword id="KW-0378">Hydrolase</keyword>
<keyword id="KW-1185">Reference proteome</keyword>
<keyword id="KW-0732">Signal</keyword>
<feature type="signal peptide" evidence="1">
    <location>
        <begin position="1"/>
        <end position="19"/>
    </location>
</feature>
<feature type="chain" id="PRO_0000012131" description="Putative mannan endo-1,6-alpha-mannosidase C970.02">
    <location>
        <begin position="20"/>
        <end position="442"/>
    </location>
</feature>
<feature type="glycosylation site" description="N-linked (GlcNAc...) asparagine" evidence="1">
    <location>
        <position position="25"/>
    </location>
</feature>
<feature type="glycosylation site" description="N-linked (GlcNAc...) asparagine" evidence="1">
    <location>
        <position position="82"/>
    </location>
</feature>
<feature type="glycosylation site" description="N-linked (GlcNAc...) asparagine" evidence="1">
    <location>
        <position position="107"/>
    </location>
</feature>
<feature type="glycosylation site" description="N-linked (GlcNAc...) asparagine" evidence="1">
    <location>
        <position position="131"/>
    </location>
</feature>
<feature type="glycosylation site" description="N-linked (GlcNAc...) asparagine" evidence="1">
    <location>
        <position position="201"/>
    </location>
</feature>
<feature type="glycosylation site" description="N-linked (GlcNAc...) asparagine" evidence="1">
    <location>
        <position position="236"/>
    </location>
</feature>
<feature type="glycosylation site" description="N-linked (GlcNAc...) asparagine" evidence="1">
    <location>
        <position position="261"/>
    </location>
</feature>
<feature type="glycosylation site" description="N-linked (GlcNAc...) asparagine" evidence="1">
    <location>
        <position position="264"/>
    </location>
</feature>
<feature type="glycosylation site" description="N-linked (GlcNAc...) asparagine" evidence="1">
    <location>
        <position position="277"/>
    </location>
</feature>
<feature type="glycosylation site" description="N-linked (GlcNAc...) asparagine" evidence="1">
    <location>
        <position position="361"/>
    </location>
</feature>
<name>YCZ2_SCHPO</name>
<gene>
    <name type="ORF">SPCC970.02</name>
</gene>
<protein>
    <recommendedName>
        <fullName>Putative mannan endo-1,6-alpha-mannosidase C970.02</fullName>
        <ecNumber>3.2.1.101</ecNumber>
    </recommendedName>
    <alternativeName>
        <fullName>Endo-alpha-1-&gt;6-D-mannanase C970.02</fullName>
    </alternativeName>
</protein>
<organism>
    <name type="scientific">Schizosaccharomyces pombe (strain 972 / ATCC 24843)</name>
    <name type="common">Fission yeast</name>
    <dbReference type="NCBI Taxonomy" id="284812"/>
    <lineage>
        <taxon>Eukaryota</taxon>
        <taxon>Fungi</taxon>
        <taxon>Dikarya</taxon>
        <taxon>Ascomycota</taxon>
        <taxon>Taphrinomycotina</taxon>
        <taxon>Schizosaccharomycetes</taxon>
        <taxon>Schizosaccharomycetales</taxon>
        <taxon>Schizosaccharomycetaceae</taxon>
        <taxon>Schizosaccharomyces</taxon>
    </lineage>
</organism>
<sequence length="442" mass="49135">MSLTIFISLATILFSFAEAISVDLNDTSSVDLATSLVADGLLNYYAGQHKGGTIGMFLPPAYWWEAGAAWNGLLNRYIATGNSTYNELVKTSMLYQSGEDSDYMPSNYTTSEGNDDQAFWGLTVISAAEANFSNPAADEPQWLELAQAVFNQQVTRWDTDHCNGGLRWQITEFNSGYNYKNTVSNGAFFQLAARLARFTDNDTYAEWANVAYDWSQRIGFIQEDYTVFDGSSIKDNCSSIEITQWTYNIGLYMAGAAYMYNYTNSTVWKTRVEGFANKTAKTFFFKDIMFEPVCEIALSCNYDQTSFKGFLTRFMVYTAQMAPFTAPLLEPLLISTAKAAAGACCGGYDGVTCGVQWWWNNDTWDGLYGLGEQMSALEAIQAPLLLKSLQVFKASNGGSSTGDPNAGLYTAPVSFANKNFENLRKHWMLLGFFLLVPTLVLY</sequence>
<reference key="1">
    <citation type="journal article" date="2002" name="Nature">
        <title>The genome sequence of Schizosaccharomyces pombe.</title>
        <authorList>
            <person name="Wood V."/>
            <person name="Gwilliam R."/>
            <person name="Rajandream M.A."/>
            <person name="Lyne M.H."/>
            <person name="Lyne R."/>
            <person name="Stewart A."/>
            <person name="Sgouros J.G."/>
            <person name="Peat N."/>
            <person name="Hayles J."/>
            <person name="Baker S.G."/>
            <person name="Basham D."/>
            <person name="Bowman S."/>
            <person name="Brooks K."/>
            <person name="Brown D."/>
            <person name="Brown S."/>
            <person name="Chillingworth T."/>
            <person name="Churcher C.M."/>
            <person name="Collins M."/>
            <person name="Connor R."/>
            <person name="Cronin A."/>
            <person name="Davis P."/>
            <person name="Feltwell T."/>
            <person name="Fraser A."/>
            <person name="Gentles S."/>
            <person name="Goble A."/>
            <person name="Hamlin N."/>
            <person name="Harris D.E."/>
            <person name="Hidalgo J."/>
            <person name="Hodgson G."/>
            <person name="Holroyd S."/>
            <person name="Hornsby T."/>
            <person name="Howarth S."/>
            <person name="Huckle E.J."/>
            <person name="Hunt S."/>
            <person name="Jagels K."/>
            <person name="James K.D."/>
            <person name="Jones L."/>
            <person name="Jones M."/>
            <person name="Leather S."/>
            <person name="McDonald S."/>
            <person name="McLean J."/>
            <person name="Mooney P."/>
            <person name="Moule S."/>
            <person name="Mungall K.L."/>
            <person name="Murphy L.D."/>
            <person name="Niblett D."/>
            <person name="Odell C."/>
            <person name="Oliver K."/>
            <person name="O'Neil S."/>
            <person name="Pearson D."/>
            <person name="Quail M.A."/>
            <person name="Rabbinowitsch E."/>
            <person name="Rutherford K.M."/>
            <person name="Rutter S."/>
            <person name="Saunders D."/>
            <person name="Seeger K."/>
            <person name="Sharp S."/>
            <person name="Skelton J."/>
            <person name="Simmonds M.N."/>
            <person name="Squares R."/>
            <person name="Squares S."/>
            <person name="Stevens K."/>
            <person name="Taylor K."/>
            <person name="Taylor R.G."/>
            <person name="Tivey A."/>
            <person name="Walsh S.V."/>
            <person name="Warren T."/>
            <person name="Whitehead S."/>
            <person name="Woodward J.R."/>
            <person name="Volckaert G."/>
            <person name="Aert R."/>
            <person name="Robben J."/>
            <person name="Grymonprez B."/>
            <person name="Weltjens I."/>
            <person name="Vanstreels E."/>
            <person name="Rieger M."/>
            <person name="Schaefer M."/>
            <person name="Mueller-Auer S."/>
            <person name="Gabel C."/>
            <person name="Fuchs M."/>
            <person name="Duesterhoeft A."/>
            <person name="Fritzc C."/>
            <person name="Holzer E."/>
            <person name="Moestl D."/>
            <person name="Hilbert H."/>
            <person name="Borzym K."/>
            <person name="Langer I."/>
            <person name="Beck A."/>
            <person name="Lehrach H."/>
            <person name="Reinhardt R."/>
            <person name="Pohl T.M."/>
            <person name="Eger P."/>
            <person name="Zimmermann W."/>
            <person name="Wedler H."/>
            <person name="Wambutt R."/>
            <person name="Purnelle B."/>
            <person name="Goffeau A."/>
            <person name="Cadieu E."/>
            <person name="Dreano S."/>
            <person name="Gloux S."/>
            <person name="Lelaure V."/>
            <person name="Mottier S."/>
            <person name="Galibert F."/>
            <person name="Aves S.J."/>
            <person name="Xiang Z."/>
            <person name="Hunt C."/>
            <person name="Moore K."/>
            <person name="Hurst S.M."/>
            <person name="Lucas M."/>
            <person name="Rochet M."/>
            <person name="Gaillardin C."/>
            <person name="Tallada V.A."/>
            <person name="Garzon A."/>
            <person name="Thode G."/>
            <person name="Daga R.R."/>
            <person name="Cruzado L."/>
            <person name="Jimenez J."/>
            <person name="Sanchez M."/>
            <person name="del Rey F."/>
            <person name="Benito J."/>
            <person name="Dominguez A."/>
            <person name="Revuelta J.L."/>
            <person name="Moreno S."/>
            <person name="Armstrong J."/>
            <person name="Forsburg S.L."/>
            <person name="Cerutti L."/>
            <person name="Lowe T."/>
            <person name="McCombie W.R."/>
            <person name="Paulsen I."/>
            <person name="Potashkin J."/>
            <person name="Shpakovski G.V."/>
            <person name="Ussery D."/>
            <person name="Barrell B.G."/>
            <person name="Nurse P."/>
        </authorList>
    </citation>
    <scope>NUCLEOTIDE SEQUENCE [LARGE SCALE GENOMIC DNA]</scope>
    <source>
        <strain>972 / ATCC 24843</strain>
    </source>
</reference>
<evidence type="ECO:0000255" key="1"/>
<evidence type="ECO:0000305" key="2"/>
<dbReference type="EC" id="3.2.1.101"/>
<dbReference type="EMBL" id="CU329672">
    <property type="protein sequence ID" value="CAA20695.1"/>
    <property type="molecule type" value="Genomic_DNA"/>
</dbReference>
<dbReference type="PIR" id="T41678">
    <property type="entry name" value="T41678"/>
</dbReference>
<dbReference type="SMR" id="O74556"/>
<dbReference type="BioGRID" id="275485">
    <property type="interactions" value="3"/>
</dbReference>
<dbReference type="FunCoup" id="O74556">
    <property type="interactions" value="40"/>
</dbReference>
<dbReference type="STRING" id="284812.O74556"/>
<dbReference type="CAZy" id="GH76">
    <property type="family name" value="Glycoside Hydrolase Family 76"/>
</dbReference>
<dbReference type="PaxDb" id="4896-SPCC970.02.1"/>
<dbReference type="EnsemblFungi" id="SPCC970.02.1">
    <property type="protein sequence ID" value="SPCC970.02.1:pep"/>
    <property type="gene ID" value="SPCC970.02"/>
</dbReference>
<dbReference type="KEGG" id="spo:2538908"/>
<dbReference type="PomBase" id="SPCC970.02"/>
<dbReference type="VEuPathDB" id="FungiDB:SPCC970.02"/>
<dbReference type="eggNOG" id="ENOG502QSWP">
    <property type="taxonomic scope" value="Eukaryota"/>
</dbReference>
<dbReference type="HOGENOM" id="CLU_025694_1_2_1"/>
<dbReference type="InParanoid" id="O74556"/>
<dbReference type="OMA" id="WAPHTYD"/>
<dbReference type="PhylomeDB" id="O74556"/>
<dbReference type="PRO" id="PR:O74556"/>
<dbReference type="Proteomes" id="UP000002485">
    <property type="component" value="Chromosome III"/>
</dbReference>
<dbReference type="GO" id="GO:0009897">
    <property type="term" value="C:external side of plasma membrane"/>
    <property type="evidence" value="ECO:0000266"/>
    <property type="project" value="PomBase"/>
</dbReference>
<dbReference type="GO" id="GO:0008496">
    <property type="term" value="F:mannan endo-1,6-alpha-mannosidase activity"/>
    <property type="evidence" value="ECO:0000255"/>
    <property type="project" value="PomBase"/>
</dbReference>
<dbReference type="GO" id="GO:0016052">
    <property type="term" value="P:carbohydrate catabolic process"/>
    <property type="evidence" value="ECO:0007669"/>
    <property type="project" value="InterPro"/>
</dbReference>
<dbReference type="GO" id="GO:0009272">
    <property type="term" value="P:fungal-type cell wall biogenesis"/>
    <property type="evidence" value="ECO:0000318"/>
    <property type="project" value="GO_Central"/>
</dbReference>
<dbReference type="FunFam" id="1.50.10.20:FF:000033">
    <property type="entry name" value="Mannan endo-1,6-alpha-mannosidase"/>
    <property type="match status" value="1"/>
</dbReference>
<dbReference type="Gene3D" id="1.50.10.20">
    <property type="match status" value="1"/>
</dbReference>
<dbReference type="InterPro" id="IPR008928">
    <property type="entry name" value="6-hairpin_glycosidase_sf"/>
</dbReference>
<dbReference type="InterPro" id="IPR005198">
    <property type="entry name" value="Glyco_hydro_76"/>
</dbReference>
<dbReference type="InterPro" id="IPR014480">
    <property type="entry name" value="Mannan-1_6-alpha_mannosidase"/>
</dbReference>
<dbReference type="PANTHER" id="PTHR12145">
    <property type="entry name" value="MANNAN ENDO-1,6-ALPHA-MANNOSIDASE DCW1"/>
    <property type="match status" value="1"/>
</dbReference>
<dbReference type="PANTHER" id="PTHR12145:SF36">
    <property type="entry name" value="MANNAN ENDO-1,6-ALPHA-MANNOSIDASE DCW1"/>
    <property type="match status" value="1"/>
</dbReference>
<dbReference type="Pfam" id="PF03663">
    <property type="entry name" value="Glyco_hydro_76"/>
    <property type="match status" value="1"/>
</dbReference>
<dbReference type="PIRSF" id="PIRSF016302">
    <property type="entry name" value="Man_a_manosd"/>
    <property type="match status" value="1"/>
</dbReference>
<dbReference type="SUPFAM" id="SSF48208">
    <property type="entry name" value="Six-hairpin glycosidases"/>
    <property type="match status" value="1"/>
</dbReference>